<gene>
    <name evidence="5" type="primary">AMT11</name>
</gene>
<accession>C9K7C3</accession>
<proteinExistence type="evidence at transcript level"/>
<name>AMT11_ALTAL</name>
<comment type="function">
    <text evidence="2 3 4 6 7 8">Part of the gene clusters that mediate the biosynthesis of AM-toxins, host-selective toxins (HSTs) causing Alternaria blotch on apple, a worldwide distributed disease (Probable). AM-toxins are cyclic depsipeptides containing the 3 residues 2-hydroxy-isovaleric acid (2-HIV), dehydroalanine, L-alanine which are common for all 3 AM-toxins I to III. The fourth precursor is L-alpha-amino-methoxyphenyl-valeric acid (L-Amv) for AM-toxin I, L-alpha-amino-phenyl-valeric acid (L-Apv) for AM-toxin II, and L-alpha-amino-hydroxyphenyl-valeric acid (L-Ahv) for AM-toxin III (Probable). AM-toxins have two target sites for affecting susceptible apple cells; they cause invagination of the plasma membrane and electrolyte loss and chloroplast disorganization (PubMed:22846083). The non-ribosomal peptide synthetase AMT1 contains 4 catalytic modules and is responsible for activation of each residue in AM-toxin (PubMed:10875335). The aldo-keto reductase AMT2 catalyzes the conversion of 2-keto-isovaleric acid (2-KIV) to 2-hydroxy-isovaleric acid (2-HIV), one of the precursor residues incorporated by AMT1 during AM-toxin biosynthesis, by reduction of its ketone to an alcohol (PubMed:15066029). The cytochrome P450 monooxygenase AMT3 and the thioesterase AMT4 are also important for AM-toxin production, but their exact function within the AM-toxin biosynthesis are not known yet (PubMed:17990954). Up to 21 proteins (including AMT1 to AMT4) are predicted to be involved in AM-toxin biosynthesis since their expression ishighly up-regulated in AM-toxin-producing cultures (PubMed:17990954).</text>
</comment>
<comment type="pathway">
    <text evidence="8">Mycotoxin biosynthesis.</text>
</comment>
<comment type="induction">
    <text evidence="4">Expression is up-regulated more than 10 fold in toxin producing cultures.</text>
</comment>
<comment type="miscellaneous">
    <text evidence="4">Gene clusters encoding host-selective toxins (HSTs) are localized on conditionally dispensable chromosomes (CDCs), also called supernumerary chromosomes, where they are present in multiple copies (PubMed:17990954). The CDCs are not essential for saprophytic growth but controls host-selective pathogenicity (PubMed:17990954).</text>
</comment>
<feature type="chain" id="PRO_0000444846" description="AM-toxin biosynthesis protein 11">
    <location>
        <begin position="1"/>
        <end position="259"/>
    </location>
</feature>
<feature type="region of interest" description="Disordered" evidence="1">
    <location>
        <begin position="39"/>
        <end position="66"/>
    </location>
</feature>
<feature type="compositionally biased region" description="Polar residues" evidence="1">
    <location>
        <begin position="50"/>
        <end position="64"/>
    </location>
</feature>
<organism>
    <name type="scientific">Alternaria alternata</name>
    <name type="common">Alternaria rot fungus</name>
    <name type="synonym">Torula alternata</name>
    <dbReference type="NCBI Taxonomy" id="5599"/>
    <lineage>
        <taxon>Eukaryota</taxon>
        <taxon>Fungi</taxon>
        <taxon>Dikarya</taxon>
        <taxon>Ascomycota</taxon>
        <taxon>Pezizomycotina</taxon>
        <taxon>Dothideomycetes</taxon>
        <taxon>Pleosporomycetidae</taxon>
        <taxon>Pleosporales</taxon>
        <taxon>Pleosporineae</taxon>
        <taxon>Pleosporaceae</taxon>
        <taxon>Alternaria</taxon>
        <taxon>Alternaria sect. Alternaria</taxon>
        <taxon>Alternaria alternata complex</taxon>
    </lineage>
</organism>
<protein>
    <recommendedName>
        <fullName evidence="5">AM-toxin biosynthesis protein 11</fullName>
    </recommendedName>
</protein>
<sequence>MRWSESVYSLRSTLKPLFQPDSPLTLRKRNKSLCEYNIRRSRRRPEEESIQSLSKHVSTTTQPCPTDGRMMFDLSNPYHSSETVVGRDAEGPANPLDTPFSEFCFSQLVSNSAHSYLDFDLFDEPTPGTNQAQTIEPGQQTSGFENPIPYHTHRNDTPILDWSKLDRYQSLHQHSAAQFYDSLGTEQDDSAARCTLALFSGRIVADKAETNPFLIHKTHRTTVLLQNAHVGGRRQQAVLDKCYTGLGYTSLGSVRTKAR</sequence>
<reference key="1">
    <citation type="journal article" date="2007" name="Mol. Plant Microbe Interact.">
        <title>Expression profiles of genes encoded by the supernumerary chromosome controlling AM-toxin biosynthesis and pathogenicity in the apple pathotype of Alternaria alternata.</title>
        <authorList>
            <person name="Harimoto Y."/>
            <person name="Hatta R."/>
            <person name="Kodama M."/>
            <person name="Yamamoto M."/>
            <person name="Otani H."/>
            <person name="Tsuge T."/>
        </authorList>
    </citation>
    <scope>NUCLEOTIDE SEQUENCE [GENOMIC DNA]</scope>
    <scope>INDUCTION</scope>
    <scope>PATHWAY</scope>
    <source>
        <strain>NBRC 8984</strain>
    </source>
</reference>
<reference key="2">
    <citation type="journal article" date="2000" name="Mol. Plant Microbe Interact.">
        <title>Cloning and characterization of a cyclic peptide synthetase gene from Alternaria alternata apple pathotype whose product is involved in AM-toxin synthesis and pathogenicity.</title>
        <authorList>
            <person name="Johnson R.D."/>
            <person name="Johnson L."/>
            <person name="Itoh Y."/>
            <person name="Kodama M."/>
            <person name="Otani H."/>
            <person name="Kohmoto K."/>
        </authorList>
    </citation>
    <scope>FUNCTION</scope>
    <source>
        <strain>M-71</strain>
    </source>
</reference>
<reference key="3">
    <citation type="journal article" date="2004" name="Mol. Microbiol.">
        <title>Dissection of the host range of the fungal plant pathogen Alternaria alternata by modification of secondary metabolism.</title>
        <authorList>
            <person name="Ito K."/>
            <person name="Tanaka T."/>
            <person name="Hatta R."/>
            <person name="Yamamoto M."/>
            <person name="Akimitsu K."/>
            <person name="Tsuge T."/>
        </authorList>
    </citation>
    <scope>FUNCTION</scope>
    <source>
        <strain>NBRC 8984</strain>
    </source>
</reference>
<reference key="4">
    <citation type="journal article" date="2013" name="FEMS Microbiol. Rev.">
        <title>Host-selective toxins produced by the plant pathogenic fungus Alternaria alternata.</title>
        <authorList>
            <person name="Tsuge T."/>
            <person name="Harimoto Y."/>
            <person name="Akimitsu K."/>
            <person name="Ohtani K."/>
            <person name="Kodama M."/>
            <person name="Akagi Y."/>
            <person name="Egusa M."/>
            <person name="Yamamoto M."/>
            <person name="Otani H."/>
        </authorList>
    </citation>
    <scope>REVIEW ON HOST-SELECTIVE TOXINS</scope>
</reference>
<evidence type="ECO:0000256" key="1">
    <source>
        <dbReference type="SAM" id="MobiDB-lite"/>
    </source>
</evidence>
<evidence type="ECO:0000269" key="2">
    <source>
    </source>
</evidence>
<evidence type="ECO:0000269" key="3">
    <source>
    </source>
</evidence>
<evidence type="ECO:0000269" key="4">
    <source>
    </source>
</evidence>
<evidence type="ECO:0000303" key="5">
    <source>
    </source>
</evidence>
<evidence type="ECO:0000303" key="6">
    <source>
    </source>
</evidence>
<evidence type="ECO:0000305" key="7">
    <source>
    </source>
</evidence>
<evidence type="ECO:0000305" key="8">
    <source>
    </source>
</evidence>
<keyword id="KW-0223">Dioxygenase</keyword>
<keyword id="KW-0408">Iron</keyword>
<keyword id="KW-0479">Metal-binding</keyword>
<keyword id="KW-0560">Oxidoreductase</keyword>
<keyword id="KW-0843">Virulence</keyword>
<dbReference type="EMBL" id="AB525198">
    <property type="protein sequence ID" value="BAI44747.1"/>
    <property type="molecule type" value="Genomic_DNA"/>
</dbReference>
<dbReference type="GO" id="GO:0051213">
    <property type="term" value="F:dioxygenase activity"/>
    <property type="evidence" value="ECO:0007669"/>
    <property type="project" value="UniProtKB-KW"/>
</dbReference>
<dbReference type="GO" id="GO:0046872">
    <property type="term" value="F:metal ion binding"/>
    <property type="evidence" value="ECO:0007669"/>
    <property type="project" value="UniProtKB-KW"/>
</dbReference>